<evidence type="ECO:0000255" key="1"/>
<evidence type="ECO:0000255" key="2">
    <source>
        <dbReference type="PROSITE-ProRule" id="PRU00159"/>
    </source>
</evidence>
<evidence type="ECO:0000255" key="3">
    <source>
        <dbReference type="PROSITE-ProRule" id="PRU00184"/>
    </source>
</evidence>
<evidence type="ECO:0000255" key="4">
    <source>
        <dbReference type="PROSITE-ProRule" id="PRU00316"/>
    </source>
</evidence>
<evidence type="ECO:0000255" key="5">
    <source>
        <dbReference type="PROSITE-ProRule" id="PRU00883"/>
    </source>
</evidence>
<evidence type="ECO:0000255" key="6">
    <source>
        <dbReference type="PROSITE-ProRule" id="PRU10028"/>
    </source>
</evidence>
<evidence type="ECO:0000256" key="7">
    <source>
        <dbReference type="SAM" id="MobiDB-lite"/>
    </source>
</evidence>
<organism>
    <name type="scientific">Gallus gallus</name>
    <name type="common">Chicken</name>
    <dbReference type="NCBI Taxonomy" id="9031"/>
    <lineage>
        <taxon>Eukaryota</taxon>
        <taxon>Metazoa</taxon>
        <taxon>Chordata</taxon>
        <taxon>Craniata</taxon>
        <taxon>Vertebrata</taxon>
        <taxon>Euteleostomi</taxon>
        <taxon>Archelosauria</taxon>
        <taxon>Archosauria</taxon>
        <taxon>Dinosauria</taxon>
        <taxon>Saurischia</taxon>
        <taxon>Theropoda</taxon>
        <taxon>Coelurosauria</taxon>
        <taxon>Aves</taxon>
        <taxon>Neognathae</taxon>
        <taxon>Galloanserae</taxon>
        <taxon>Galliformes</taxon>
        <taxon>Phasianidae</taxon>
        <taxon>Phasianinae</taxon>
        <taxon>Gallus</taxon>
    </lineage>
</organism>
<reference key="1">
    <citation type="journal article" date="1996" name="J. Cell Biol.">
        <title>Developmental expression and distinctive tyrosine phosphorylation of the Eph-related receptor tyrosine kinase Cek9.</title>
        <authorList>
            <person name="Soans C."/>
            <person name="Holash J.A."/>
            <person name="Pavlova Y."/>
            <person name="Pasquale E.B."/>
        </authorList>
    </citation>
    <scope>NUCLEOTIDE SEQUENCE [MRNA]</scope>
</reference>
<reference key="2">
    <citation type="journal article" date="1993" name="Oncogene">
        <title>Five novel avian Eph-related tyrosine kinases are differentially expressed.</title>
        <authorList>
            <person name="Sajjadi F.G."/>
            <person name="Pasquale E.B."/>
        </authorList>
    </citation>
    <scope>PARTIAL NUCLEOTIDE SEQUENCE</scope>
</reference>
<comment type="function">
    <text>Receptor for members of the ephrin-B family.</text>
</comment>
<comment type="catalytic activity">
    <reaction evidence="6">
        <text>L-tyrosyl-[protein] + ATP = O-phospho-L-tyrosyl-[protein] + ADP + H(+)</text>
        <dbReference type="Rhea" id="RHEA:10596"/>
        <dbReference type="Rhea" id="RHEA-COMP:10136"/>
        <dbReference type="Rhea" id="RHEA-COMP:20101"/>
        <dbReference type="ChEBI" id="CHEBI:15378"/>
        <dbReference type="ChEBI" id="CHEBI:30616"/>
        <dbReference type="ChEBI" id="CHEBI:46858"/>
        <dbReference type="ChEBI" id="CHEBI:61978"/>
        <dbReference type="ChEBI" id="CHEBI:456216"/>
        <dbReference type="EC" id="2.7.10.1"/>
    </reaction>
</comment>
<comment type="subcellular location">
    <subcellularLocation>
        <location>Membrane</location>
        <topology>Single-pass type I membrane protein</topology>
    </subcellularLocation>
</comment>
<comment type="tissue specificity">
    <text>Most abundant in thymus and detectable in brain, retina, kidney, lung and heart. Not detected in skeletal muscle and liver.</text>
</comment>
<comment type="similarity">
    <text evidence="2">Belongs to the protein kinase superfamily. Tyr protein kinase family. Ephrin receptor subfamily.</text>
</comment>
<protein>
    <recommendedName>
        <fullName>Ephrin type-B receptor 5</fullName>
        <ecNumber>2.7.10.1</ecNumber>
    </recommendedName>
    <alternativeName>
        <fullName>EPH-like kinase 9</fullName>
        <shortName>EK9</shortName>
        <shortName>cEK9</shortName>
    </alternativeName>
</protein>
<proteinExistence type="evidence at transcript level"/>
<feature type="signal peptide" evidence="1">
    <location>
        <begin position="1"/>
        <end position="29"/>
    </location>
</feature>
<feature type="chain" id="PRO_0000016836" description="Ephrin type-B receptor 5">
    <location>
        <begin position="30"/>
        <end position="1002"/>
    </location>
</feature>
<feature type="topological domain" description="Extracellular" evidence="1">
    <location>
        <begin position="30"/>
        <end position="564"/>
    </location>
</feature>
<feature type="transmembrane region" description="Helical" evidence="1">
    <location>
        <begin position="565"/>
        <end position="585"/>
    </location>
</feature>
<feature type="topological domain" description="Cytoplasmic" evidence="1">
    <location>
        <begin position="586"/>
        <end position="1002"/>
    </location>
</feature>
<feature type="domain" description="Eph LBD" evidence="5">
    <location>
        <begin position="31"/>
        <end position="213"/>
    </location>
</feature>
<feature type="domain" description="Fibronectin type-III 1" evidence="4">
    <location>
        <begin position="344"/>
        <end position="452"/>
    </location>
</feature>
<feature type="domain" description="Fibronectin type-III 2" evidence="4">
    <location>
        <begin position="453"/>
        <end position="548"/>
    </location>
</feature>
<feature type="domain" description="Protein kinase" evidence="2">
    <location>
        <begin position="637"/>
        <end position="900"/>
    </location>
</feature>
<feature type="domain" description="SAM" evidence="3">
    <location>
        <begin position="929"/>
        <end position="993"/>
    </location>
</feature>
<feature type="region of interest" description="Disordered" evidence="7">
    <location>
        <begin position="906"/>
        <end position="928"/>
    </location>
</feature>
<feature type="short sequence motif" description="PDZ-binding" evidence="1">
    <location>
        <begin position="1000"/>
        <end position="1002"/>
    </location>
</feature>
<feature type="compositionally biased region" description="Polar residues" evidence="7">
    <location>
        <begin position="910"/>
        <end position="928"/>
    </location>
</feature>
<feature type="active site" description="Proton acceptor" evidence="2 6">
    <location>
        <position position="762"/>
    </location>
</feature>
<feature type="binding site" evidence="2">
    <location>
        <begin position="643"/>
        <end position="651"/>
    </location>
    <ligand>
        <name>ATP</name>
        <dbReference type="ChEBI" id="CHEBI:30616"/>
    </ligand>
</feature>
<feature type="binding site" evidence="2">
    <location>
        <position position="669"/>
    </location>
    <ligand>
        <name>ATP</name>
        <dbReference type="ChEBI" id="CHEBI:30616"/>
    </ligand>
</feature>
<feature type="glycosylation site" description="N-linked (GlcNAc...) asparagine" evidence="1">
    <location>
        <position position="446"/>
    </location>
</feature>
<dbReference type="EC" id="2.7.10.1"/>
<dbReference type="EMBL" id="U23783">
    <property type="protein sequence ID" value="AAB41054.1"/>
    <property type="molecule type" value="mRNA"/>
</dbReference>
<dbReference type="PIR" id="S33506">
    <property type="entry name" value="S33506"/>
</dbReference>
<dbReference type="RefSeq" id="NP_001004387.1">
    <property type="nucleotide sequence ID" value="NM_001004387.1"/>
</dbReference>
<dbReference type="SMR" id="Q07497"/>
<dbReference type="FunCoup" id="Q07497">
    <property type="interactions" value="45"/>
</dbReference>
<dbReference type="STRING" id="9031.ENSGALP00000023737"/>
<dbReference type="GlyCosmos" id="Q07497">
    <property type="glycosylation" value="1 site, No reported glycans"/>
</dbReference>
<dbReference type="GlyGen" id="Q07497">
    <property type="glycosylation" value="1 site"/>
</dbReference>
<dbReference type="iPTMnet" id="Q07497"/>
<dbReference type="PaxDb" id="9031-ENSGALP00000023737"/>
<dbReference type="GeneID" id="418308"/>
<dbReference type="KEGG" id="gga:418308"/>
<dbReference type="CTD" id="2051"/>
<dbReference type="VEuPathDB" id="HostDB:geneid_418308"/>
<dbReference type="eggNOG" id="KOG0196">
    <property type="taxonomic scope" value="Eukaryota"/>
</dbReference>
<dbReference type="InParanoid" id="Q07497"/>
<dbReference type="OrthoDB" id="4062651at2759"/>
<dbReference type="PhylomeDB" id="Q07497"/>
<dbReference type="BRENDA" id="2.7.10.1">
    <property type="organism ID" value="1306"/>
</dbReference>
<dbReference type="PRO" id="PR:Q07497"/>
<dbReference type="Proteomes" id="UP000000539">
    <property type="component" value="Unassembled WGS sequence"/>
</dbReference>
<dbReference type="GO" id="GO:0030425">
    <property type="term" value="C:dendrite"/>
    <property type="evidence" value="ECO:0000318"/>
    <property type="project" value="GO_Central"/>
</dbReference>
<dbReference type="GO" id="GO:0005886">
    <property type="term" value="C:plasma membrane"/>
    <property type="evidence" value="ECO:0000318"/>
    <property type="project" value="GO_Central"/>
</dbReference>
<dbReference type="GO" id="GO:0005524">
    <property type="term" value="F:ATP binding"/>
    <property type="evidence" value="ECO:0007669"/>
    <property type="project" value="UniProtKB-KW"/>
</dbReference>
<dbReference type="GO" id="GO:0005005">
    <property type="term" value="F:transmembrane-ephrin receptor activity"/>
    <property type="evidence" value="ECO:0000318"/>
    <property type="project" value="GO_Central"/>
</dbReference>
<dbReference type="GO" id="GO:0007411">
    <property type="term" value="P:axon guidance"/>
    <property type="evidence" value="ECO:0000318"/>
    <property type="project" value="GO_Central"/>
</dbReference>
<dbReference type="GO" id="GO:0048013">
    <property type="term" value="P:ephrin receptor signaling pathway"/>
    <property type="evidence" value="ECO:0000318"/>
    <property type="project" value="GO_Central"/>
</dbReference>
<dbReference type="CDD" id="cd10475">
    <property type="entry name" value="EphR_LBD_B6"/>
    <property type="match status" value="1"/>
</dbReference>
<dbReference type="CDD" id="cd00063">
    <property type="entry name" value="FN3"/>
    <property type="match status" value="2"/>
</dbReference>
<dbReference type="CDD" id="cd05065">
    <property type="entry name" value="PTKc_EphR_B"/>
    <property type="match status" value="1"/>
</dbReference>
<dbReference type="CDD" id="cd09555">
    <property type="entry name" value="SAM_EPH-B6"/>
    <property type="match status" value="1"/>
</dbReference>
<dbReference type="FunFam" id="1.10.150.50:FF:000001">
    <property type="entry name" value="Ephrin type-A receptor 5"/>
    <property type="match status" value="1"/>
</dbReference>
<dbReference type="FunFam" id="2.10.50.10:FF:000001">
    <property type="entry name" value="Ephrin type-A receptor 5"/>
    <property type="match status" value="1"/>
</dbReference>
<dbReference type="FunFam" id="3.30.200.20:FF:000001">
    <property type="entry name" value="Ephrin type-A receptor 5"/>
    <property type="match status" value="1"/>
</dbReference>
<dbReference type="FunFam" id="2.60.40.10:FF:000059">
    <property type="entry name" value="Ephrin type-A receptor 6"/>
    <property type="match status" value="1"/>
</dbReference>
<dbReference type="FunFam" id="1.10.510.10:FF:000015">
    <property type="entry name" value="Ephrin type-B receptor 2"/>
    <property type="match status" value="1"/>
</dbReference>
<dbReference type="FunFam" id="2.60.120.260:FF:000064">
    <property type="entry name" value="Ephrin type-B receptor 6"/>
    <property type="match status" value="1"/>
</dbReference>
<dbReference type="FunFam" id="2.60.40.10:FF:000508">
    <property type="entry name" value="ephrin type-B receptor 6"/>
    <property type="match status" value="1"/>
</dbReference>
<dbReference type="Gene3D" id="2.60.40.1770">
    <property type="entry name" value="ephrin a2 ectodomain"/>
    <property type="match status" value="1"/>
</dbReference>
<dbReference type="Gene3D" id="2.60.120.260">
    <property type="entry name" value="Galactose-binding domain-like"/>
    <property type="match status" value="1"/>
</dbReference>
<dbReference type="Gene3D" id="2.60.40.10">
    <property type="entry name" value="Immunoglobulins"/>
    <property type="match status" value="2"/>
</dbReference>
<dbReference type="Gene3D" id="3.30.200.20">
    <property type="entry name" value="Phosphorylase Kinase, domain 1"/>
    <property type="match status" value="1"/>
</dbReference>
<dbReference type="Gene3D" id="1.10.150.50">
    <property type="entry name" value="Transcription Factor, Ets-1"/>
    <property type="match status" value="1"/>
</dbReference>
<dbReference type="Gene3D" id="1.10.510.10">
    <property type="entry name" value="Transferase(Phosphotransferase) domain 1"/>
    <property type="match status" value="1"/>
</dbReference>
<dbReference type="Gene3D" id="2.10.50.10">
    <property type="entry name" value="Tumor Necrosis Factor Receptor, subunit A, domain 2"/>
    <property type="match status" value="1"/>
</dbReference>
<dbReference type="InterPro" id="IPR027936">
    <property type="entry name" value="Eph_TM"/>
</dbReference>
<dbReference type="InterPro" id="IPR001090">
    <property type="entry name" value="Ephrin_rcpt_lig-bd_dom"/>
</dbReference>
<dbReference type="InterPro" id="IPR050449">
    <property type="entry name" value="Ephrin_rcpt_TKs"/>
</dbReference>
<dbReference type="InterPro" id="IPR003961">
    <property type="entry name" value="FN3_dom"/>
</dbReference>
<dbReference type="InterPro" id="IPR036116">
    <property type="entry name" value="FN3_sf"/>
</dbReference>
<dbReference type="InterPro" id="IPR008979">
    <property type="entry name" value="Galactose-bd-like_sf"/>
</dbReference>
<dbReference type="InterPro" id="IPR009030">
    <property type="entry name" value="Growth_fac_rcpt_cys_sf"/>
</dbReference>
<dbReference type="InterPro" id="IPR013783">
    <property type="entry name" value="Ig-like_fold"/>
</dbReference>
<dbReference type="InterPro" id="IPR011009">
    <property type="entry name" value="Kinase-like_dom_sf"/>
</dbReference>
<dbReference type="InterPro" id="IPR000719">
    <property type="entry name" value="Prot_kinase_dom"/>
</dbReference>
<dbReference type="InterPro" id="IPR017441">
    <property type="entry name" value="Protein_kinase_ATP_BS"/>
</dbReference>
<dbReference type="InterPro" id="IPR001660">
    <property type="entry name" value="SAM"/>
</dbReference>
<dbReference type="InterPro" id="IPR013761">
    <property type="entry name" value="SAM/pointed_sf"/>
</dbReference>
<dbReference type="InterPro" id="IPR001245">
    <property type="entry name" value="Ser-Thr/Tyr_kinase_cat_dom"/>
</dbReference>
<dbReference type="InterPro" id="IPR011641">
    <property type="entry name" value="Tyr-kin_ephrin_A/B_rcpt-like"/>
</dbReference>
<dbReference type="InterPro" id="IPR008266">
    <property type="entry name" value="Tyr_kinase_AS"/>
</dbReference>
<dbReference type="InterPro" id="IPR020635">
    <property type="entry name" value="Tyr_kinase_cat_dom"/>
</dbReference>
<dbReference type="InterPro" id="IPR016257">
    <property type="entry name" value="Tyr_kinase_ephrin_rcpt"/>
</dbReference>
<dbReference type="InterPro" id="IPR001426">
    <property type="entry name" value="Tyr_kinase_rcpt_V_CS"/>
</dbReference>
<dbReference type="PANTHER" id="PTHR46877">
    <property type="entry name" value="EPH RECEPTOR A5"/>
    <property type="match status" value="1"/>
</dbReference>
<dbReference type="PANTHER" id="PTHR46877:SF15">
    <property type="entry name" value="EPHRIN TYPE-B RECEPTOR 6"/>
    <property type="match status" value="1"/>
</dbReference>
<dbReference type="Pfam" id="PF14575">
    <property type="entry name" value="EphA2_TM"/>
    <property type="match status" value="1"/>
</dbReference>
<dbReference type="Pfam" id="PF01404">
    <property type="entry name" value="Ephrin_lbd"/>
    <property type="match status" value="1"/>
</dbReference>
<dbReference type="Pfam" id="PF07699">
    <property type="entry name" value="Ephrin_rec_like"/>
    <property type="match status" value="1"/>
</dbReference>
<dbReference type="Pfam" id="PF00041">
    <property type="entry name" value="fn3"/>
    <property type="match status" value="2"/>
</dbReference>
<dbReference type="Pfam" id="PF07714">
    <property type="entry name" value="PK_Tyr_Ser-Thr"/>
    <property type="match status" value="1"/>
</dbReference>
<dbReference type="Pfam" id="PF07647">
    <property type="entry name" value="SAM_2"/>
    <property type="match status" value="1"/>
</dbReference>
<dbReference type="PIRSF" id="PIRSF000666">
    <property type="entry name" value="TyrPK_ephrin_receptor"/>
    <property type="match status" value="1"/>
</dbReference>
<dbReference type="PRINTS" id="PR00014">
    <property type="entry name" value="FNTYPEIII"/>
</dbReference>
<dbReference type="PRINTS" id="PR00109">
    <property type="entry name" value="TYRKINASE"/>
</dbReference>
<dbReference type="SMART" id="SM00615">
    <property type="entry name" value="EPH_lbd"/>
    <property type="match status" value="1"/>
</dbReference>
<dbReference type="SMART" id="SM01411">
    <property type="entry name" value="Ephrin_rec_like"/>
    <property type="match status" value="1"/>
</dbReference>
<dbReference type="SMART" id="SM00060">
    <property type="entry name" value="FN3"/>
    <property type="match status" value="2"/>
</dbReference>
<dbReference type="SMART" id="SM00454">
    <property type="entry name" value="SAM"/>
    <property type="match status" value="1"/>
</dbReference>
<dbReference type="SMART" id="SM00219">
    <property type="entry name" value="TyrKc"/>
    <property type="match status" value="1"/>
</dbReference>
<dbReference type="SUPFAM" id="SSF49265">
    <property type="entry name" value="Fibronectin type III"/>
    <property type="match status" value="1"/>
</dbReference>
<dbReference type="SUPFAM" id="SSF49785">
    <property type="entry name" value="Galactose-binding domain-like"/>
    <property type="match status" value="1"/>
</dbReference>
<dbReference type="SUPFAM" id="SSF57184">
    <property type="entry name" value="Growth factor receptor domain"/>
    <property type="match status" value="1"/>
</dbReference>
<dbReference type="SUPFAM" id="SSF56112">
    <property type="entry name" value="Protein kinase-like (PK-like)"/>
    <property type="match status" value="1"/>
</dbReference>
<dbReference type="SUPFAM" id="SSF47769">
    <property type="entry name" value="SAM/Pointed domain"/>
    <property type="match status" value="1"/>
</dbReference>
<dbReference type="PROSITE" id="PS01186">
    <property type="entry name" value="EGF_2"/>
    <property type="match status" value="1"/>
</dbReference>
<dbReference type="PROSITE" id="PS51550">
    <property type="entry name" value="EPH_LBD"/>
    <property type="match status" value="1"/>
</dbReference>
<dbReference type="PROSITE" id="PS50853">
    <property type="entry name" value="FN3"/>
    <property type="match status" value="2"/>
</dbReference>
<dbReference type="PROSITE" id="PS00107">
    <property type="entry name" value="PROTEIN_KINASE_ATP"/>
    <property type="match status" value="1"/>
</dbReference>
<dbReference type="PROSITE" id="PS50011">
    <property type="entry name" value="PROTEIN_KINASE_DOM"/>
    <property type="match status" value="1"/>
</dbReference>
<dbReference type="PROSITE" id="PS00109">
    <property type="entry name" value="PROTEIN_KINASE_TYR"/>
    <property type="match status" value="1"/>
</dbReference>
<dbReference type="PROSITE" id="PS00790">
    <property type="entry name" value="RECEPTOR_TYR_KIN_V_1"/>
    <property type="match status" value="1"/>
</dbReference>
<dbReference type="PROSITE" id="PS00791">
    <property type="entry name" value="RECEPTOR_TYR_KIN_V_2"/>
    <property type="match status" value="1"/>
</dbReference>
<dbReference type="PROSITE" id="PS50105">
    <property type="entry name" value="SAM_DOMAIN"/>
    <property type="match status" value="1"/>
</dbReference>
<gene>
    <name type="primary">EPHB5</name>
    <name type="synonym">CEK9</name>
</gene>
<name>EPHB5_CHICK</name>
<accession>Q07497</accession>
<sequence length="1002" mass="111947">MDSNADISARRVSGMDWLWLVCFFHLVTSLEEILLDTTGETSEIGWTSHPPDGWEEVSVRDDKERQIRTFQVCNMDEPGQNNWLRTHFIERRGAHRVHVRLHFSVRDCASMRTVASTCKETFTLYYHQSDVDIASQELPEWHEGPWTKVDTIAADESFSQVDRTGKVVRMNVKVRSFGPLTKHGFYLAFQDSGACMSLVAVQVFFYKCPAVVKGFASFPETFAGGERTSLVESLGTCVANAEEASTTGSSGVRLHCNGEGEWMVATGRCSCKAGYQSVDNEQACQACPIGSFKASVGDDPCLLCPAHSHAPLPLPGSIECVCQSHYYRSASDNSDAPCTGIPSAPRDLSYEIVGSNVLLTWRLPKDLGGRKDVFFNVICKECPTRSAGTCVRCGDNVQFEPRQVGLTESRVQVSNLLARVQYTFEIQAVNLVTELSSEAPQYATINVSTSQSVPSAIPMMHQVSRATSSITLSWPQPDQPNGVILDYQLRYFDKAEDEDNSFTLTSETNMATILNLSPGKIYVFQVRARTAVGYGPYSGKMYFQTLMAGEHSEMAQDRLPLIVGSALGGLAFLVIAAIAILAIIFKSKRRETPYTDRLQQYISTRGLGVKYYIDPSTYEDPNEAIREFAKEIDVSFIKIEEVIGSGEFGEVCFGRLKHPGKREYTVAIKTLKSGYTDEQRREFLSEASIMGQFEHPNVIHLEGVVTKSRPVMIVTEFMENGSLDSFLRQKEGQFSVLQLVGMLRGIAAGMRYLSDMNYVHRDLAARNILVNSNLVCKVSDFGLSRFLEDDASNPTYTGALGCKIPIRWTAPEAVQYRKFTSSSDVWSYGIVMWEVMSYGERPYWDMSNQDVINAIDQDYRLPPPPDCPTVLHLLMLDCWQKDRVQRPKFEQIVSALDKMIRKPSALKATGTGSSRPSQPLLSNSPPDFPSLSNAHEWLDAIKMGRYKENFDQAGLITFDVISRMTLEDLQRIGITLVGHQKKILNSIQLMKVHLNQLEPVEV</sequence>
<keyword id="KW-0067">ATP-binding</keyword>
<keyword id="KW-0325">Glycoprotein</keyword>
<keyword id="KW-0418">Kinase</keyword>
<keyword id="KW-0472">Membrane</keyword>
<keyword id="KW-0547">Nucleotide-binding</keyword>
<keyword id="KW-0675">Receptor</keyword>
<keyword id="KW-1185">Reference proteome</keyword>
<keyword id="KW-0677">Repeat</keyword>
<keyword id="KW-0732">Signal</keyword>
<keyword id="KW-0808">Transferase</keyword>
<keyword id="KW-0812">Transmembrane</keyword>
<keyword id="KW-1133">Transmembrane helix</keyword>
<keyword id="KW-0829">Tyrosine-protein kinase</keyword>